<dbReference type="EC" id="4.2.1.9" evidence="1"/>
<dbReference type="EMBL" id="CP000479">
    <property type="protein sequence ID" value="ABK68203.1"/>
    <property type="molecule type" value="Genomic_DNA"/>
</dbReference>
<dbReference type="RefSeq" id="WP_011726371.1">
    <property type="nucleotide sequence ID" value="NC_008595.1"/>
</dbReference>
<dbReference type="SMR" id="A0QMH2"/>
<dbReference type="KEGG" id="mav:MAV_4989"/>
<dbReference type="HOGENOM" id="CLU_014271_4_2_11"/>
<dbReference type="UniPathway" id="UPA00047">
    <property type="reaction ID" value="UER00057"/>
</dbReference>
<dbReference type="UniPathway" id="UPA00049">
    <property type="reaction ID" value="UER00061"/>
</dbReference>
<dbReference type="Proteomes" id="UP000001574">
    <property type="component" value="Chromosome"/>
</dbReference>
<dbReference type="GO" id="GO:0051537">
    <property type="term" value="F:2 iron, 2 sulfur cluster binding"/>
    <property type="evidence" value="ECO:0007669"/>
    <property type="project" value="UniProtKB-UniRule"/>
</dbReference>
<dbReference type="GO" id="GO:0004160">
    <property type="term" value="F:dihydroxy-acid dehydratase activity"/>
    <property type="evidence" value="ECO:0007669"/>
    <property type="project" value="UniProtKB-UniRule"/>
</dbReference>
<dbReference type="GO" id="GO:0000287">
    <property type="term" value="F:magnesium ion binding"/>
    <property type="evidence" value="ECO:0007669"/>
    <property type="project" value="UniProtKB-UniRule"/>
</dbReference>
<dbReference type="GO" id="GO:0009097">
    <property type="term" value="P:isoleucine biosynthetic process"/>
    <property type="evidence" value="ECO:0007669"/>
    <property type="project" value="UniProtKB-UniRule"/>
</dbReference>
<dbReference type="GO" id="GO:0009099">
    <property type="term" value="P:L-valine biosynthetic process"/>
    <property type="evidence" value="ECO:0007669"/>
    <property type="project" value="UniProtKB-UniRule"/>
</dbReference>
<dbReference type="FunFam" id="3.50.30.80:FF:000001">
    <property type="entry name" value="Dihydroxy-acid dehydratase"/>
    <property type="match status" value="1"/>
</dbReference>
<dbReference type="Gene3D" id="3.50.30.80">
    <property type="entry name" value="IlvD/EDD C-terminal domain-like"/>
    <property type="match status" value="1"/>
</dbReference>
<dbReference type="HAMAP" id="MF_00012">
    <property type="entry name" value="IlvD"/>
    <property type="match status" value="1"/>
</dbReference>
<dbReference type="InterPro" id="IPR050165">
    <property type="entry name" value="DHAD_IlvD/Edd"/>
</dbReference>
<dbReference type="InterPro" id="IPR042096">
    <property type="entry name" value="Dihydro-acid_dehy_C"/>
</dbReference>
<dbReference type="InterPro" id="IPR004404">
    <property type="entry name" value="DihydroxyA_deHydtase"/>
</dbReference>
<dbReference type="InterPro" id="IPR020558">
    <property type="entry name" value="DiOHA_6PGluconate_deHydtase_CS"/>
</dbReference>
<dbReference type="InterPro" id="IPR056740">
    <property type="entry name" value="ILV_EDD_C"/>
</dbReference>
<dbReference type="InterPro" id="IPR000581">
    <property type="entry name" value="ILV_EDD_N"/>
</dbReference>
<dbReference type="InterPro" id="IPR037237">
    <property type="entry name" value="IlvD/EDD_N"/>
</dbReference>
<dbReference type="NCBIfam" id="TIGR00110">
    <property type="entry name" value="ilvD"/>
    <property type="match status" value="1"/>
</dbReference>
<dbReference type="NCBIfam" id="NF002068">
    <property type="entry name" value="PRK00911.1"/>
    <property type="match status" value="1"/>
</dbReference>
<dbReference type="PANTHER" id="PTHR21000">
    <property type="entry name" value="DIHYDROXY-ACID DEHYDRATASE DAD"/>
    <property type="match status" value="1"/>
</dbReference>
<dbReference type="PANTHER" id="PTHR21000:SF5">
    <property type="entry name" value="DIHYDROXY-ACID DEHYDRATASE, MITOCHONDRIAL"/>
    <property type="match status" value="1"/>
</dbReference>
<dbReference type="Pfam" id="PF24877">
    <property type="entry name" value="ILV_EDD_C"/>
    <property type="match status" value="1"/>
</dbReference>
<dbReference type="Pfam" id="PF00920">
    <property type="entry name" value="ILVD_EDD_N"/>
    <property type="match status" value="1"/>
</dbReference>
<dbReference type="SUPFAM" id="SSF143975">
    <property type="entry name" value="IlvD/EDD N-terminal domain-like"/>
    <property type="match status" value="1"/>
</dbReference>
<dbReference type="SUPFAM" id="SSF52016">
    <property type="entry name" value="LeuD/IlvD-like"/>
    <property type="match status" value="1"/>
</dbReference>
<dbReference type="PROSITE" id="PS00886">
    <property type="entry name" value="ILVD_EDD_1"/>
    <property type="match status" value="1"/>
</dbReference>
<dbReference type="PROSITE" id="PS00887">
    <property type="entry name" value="ILVD_EDD_2"/>
    <property type="match status" value="1"/>
</dbReference>
<accession>A0QMH2</accession>
<organism>
    <name type="scientific">Mycobacterium avium (strain 104)</name>
    <dbReference type="NCBI Taxonomy" id="243243"/>
    <lineage>
        <taxon>Bacteria</taxon>
        <taxon>Bacillati</taxon>
        <taxon>Actinomycetota</taxon>
        <taxon>Actinomycetes</taxon>
        <taxon>Mycobacteriales</taxon>
        <taxon>Mycobacteriaceae</taxon>
        <taxon>Mycobacterium</taxon>
        <taxon>Mycobacterium avium complex (MAC)</taxon>
    </lineage>
</organism>
<name>ILVD_MYCA1</name>
<reference key="1">
    <citation type="submission" date="2006-10" db="EMBL/GenBank/DDBJ databases">
        <authorList>
            <person name="Fleischmann R.D."/>
            <person name="Dodson R.J."/>
            <person name="Haft D.H."/>
            <person name="Merkel J.S."/>
            <person name="Nelson W.C."/>
            <person name="Fraser C.M."/>
        </authorList>
    </citation>
    <scope>NUCLEOTIDE SEQUENCE [LARGE SCALE GENOMIC DNA]</scope>
    <source>
        <strain>104</strain>
    </source>
</reference>
<gene>
    <name evidence="1" type="primary">ilvD</name>
    <name type="ordered locus">MAV_4989</name>
</gene>
<protein>
    <recommendedName>
        <fullName evidence="1">Dihydroxy-acid dehydratase</fullName>
        <shortName evidence="1">DAD</shortName>
        <ecNumber evidence="1">4.2.1.9</ecNumber>
    </recommendedName>
</protein>
<sequence>MPTTDSARAADIKQPDIKPRSRDVTDGLEKAAARGMLRAVGMGDEDFAKPQIGVASSWNEITPCNLSLDRLAKAVKEGVFAAGGYPLEFGTISVSDGISMGHEGMHFSLVSREVIADSVETVMQAERLDGSVLLAGCDKSLPGMLMAAARLDLASVFLYAGSILPGVAKLSDGSEREVTIIDAFEAVGACARGLMPREDVDAIERAICPGEGACGGMYTANTMASAAEALGMSLPGSAAPPATDRRRDGFARRSGQAVVELLRRGITARDILTKEAFENAIAVVMAFGGSTNAVLHLLAIAHEADVALSLDDFSRIGSKVPHLADVKPFGRHVMTDVDHIGGVPVMMKALLDAGLLNGDCLTVTGATVAQNLAAIAPPDPDGKVLRALSDPLHPTGGITILRGSLAPEGAVVKSAGFDSDVFEGTARVFDGERAALDALEDGTITKGDAVVIRYEGPKGGPGMREMLAITGAIKGAGLGKDVLLLTDGRFSGGTTGLCVGHIAPEAVDAGPIAFLRDGDRIRLDVANRVLDVLVDPAEFDSRRTAFTPPPPRYKTGVLAKYVKLVGSAAIGAVCG</sequence>
<proteinExistence type="inferred from homology"/>
<feature type="chain" id="PRO_1000001015" description="Dihydroxy-acid dehydratase">
    <location>
        <begin position="1"/>
        <end position="575"/>
    </location>
</feature>
<feature type="region of interest" description="Disordered" evidence="2">
    <location>
        <begin position="1"/>
        <end position="25"/>
    </location>
</feature>
<feature type="compositionally biased region" description="Basic and acidic residues" evidence="2">
    <location>
        <begin position="8"/>
        <end position="25"/>
    </location>
</feature>
<feature type="active site" description="Proton acceptor" evidence="1">
    <location>
        <position position="491"/>
    </location>
</feature>
<feature type="binding site" evidence="1">
    <location>
        <position position="64"/>
    </location>
    <ligand>
        <name>[2Fe-2S] cluster</name>
        <dbReference type="ChEBI" id="CHEBI:190135"/>
    </ligand>
</feature>
<feature type="binding site" evidence="1">
    <location>
        <position position="96"/>
    </location>
    <ligand>
        <name>Mg(2+)</name>
        <dbReference type="ChEBI" id="CHEBI:18420"/>
    </ligand>
</feature>
<feature type="binding site" evidence="1">
    <location>
        <position position="137"/>
    </location>
    <ligand>
        <name>[2Fe-2S] cluster</name>
        <dbReference type="ChEBI" id="CHEBI:190135"/>
    </ligand>
</feature>
<feature type="binding site" evidence="1">
    <location>
        <position position="138"/>
    </location>
    <ligand>
        <name>Mg(2+)</name>
        <dbReference type="ChEBI" id="CHEBI:18420"/>
    </ligand>
</feature>
<feature type="binding site" description="via carbamate group" evidence="1">
    <location>
        <position position="139"/>
    </location>
    <ligand>
        <name>Mg(2+)</name>
        <dbReference type="ChEBI" id="CHEBI:18420"/>
    </ligand>
</feature>
<feature type="binding site" evidence="1">
    <location>
        <position position="214"/>
    </location>
    <ligand>
        <name>[2Fe-2S] cluster</name>
        <dbReference type="ChEBI" id="CHEBI:190135"/>
    </ligand>
</feature>
<feature type="binding site" evidence="1">
    <location>
        <position position="465"/>
    </location>
    <ligand>
        <name>Mg(2+)</name>
        <dbReference type="ChEBI" id="CHEBI:18420"/>
    </ligand>
</feature>
<feature type="modified residue" description="N6-carboxylysine" evidence="1">
    <location>
        <position position="139"/>
    </location>
</feature>
<comment type="function">
    <text evidence="1">Functions in the biosynthesis of branched-chain amino acids. Catalyzes the dehydration of (2R,3R)-2,3-dihydroxy-3-methylpentanoate (2,3-dihydroxy-3-methylvalerate) into 2-oxo-3-methylpentanoate (2-oxo-3-methylvalerate) and of (2R)-2,3-dihydroxy-3-methylbutanoate (2,3-dihydroxyisovalerate) into 2-oxo-3-methylbutanoate (2-oxoisovalerate), the penultimate precursor to L-isoleucine and L-valine, respectively.</text>
</comment>
<comment type="catalytic activity">
    <reaction evidence="1">
        <text>(2R)-2,3-dihydroxy-3-methylbutanoate = 3-methyl-2-oxobutanoate + H2O</text>
        <dbReference type="Rhea" id="RHEA:24809"/>
        <dbReference type="ChEBI" id="CHEBI:11851"/>
        <dbReference type="ChEBI" id="CHEBI:15377"/>
        <dbReference type="ChEBI" id="CHEBI:49072"/>
        <dbReference type="EC" id="4.2.1.9"/>
    </reaction>
    <physiologicalReaction direction="left-to-right" evidence="1">
        <dbReference type="Rhea" id="RHEA:24810"/>
    </physiologicalReaction>
</comment>
<comment type="catalytic activity">
    <reaction evidence="1">
        <text>(2R,3R)-2,3-dihydroxy-3-methylpentanoate = (S)-3-methyl-2-oxopentanoate + H2O</text>
        <dbReference type="Rhea" id="RHEA:27694"/>
        <dbReference type="ChEBI" id="CHEBI:15377"/>
        <dbReference type="ChEBI" id="CHEBI:35146"/>
        <dbReference type="ChEBI" id="CHEBI:49258"/>
        <dbReference type="EC" id="4.2.1.9"/>
    </reaction>
    <physiologicalReaction direction="left-to-right" evidence="1">
        <dbReference type="Rhea" id="RHEA:27695"/>
    </physiologicalReaction>
</comment>
<comment type="cofactor">
    <cofactor evidence="1">
        <name>[2Fe-2S] cluster</name>
        <dbReference type="ChEBI" id="CHEBI:190135"/>
    </cofactor>
    <text evidence="1">Binds 1 [2Fe-2S] cluster per subunit. This cluster acts as a Lewis acid cofactor.</text>
</comment>
<comment type="cofactor">
    <cofactor evidence="1">
        <name>Mg(2+)</name>
        <dbReference type="ChEBI" id="CHEBI:18420"/>
    </cofactor>
</comment>
<comment type="pathway">
    <text evidence="1">Amino-acid biosynthesis; L-isoleucine biosynthesis; L-isoleucine from 2-oxobutanoate: step 3/4.</text>
</comment>
<comment type="pathway">
    <text evidence="1">Amino-acid biosynthesis; L-valine biosynthesis; L-valine from pyruvate: step 3/4.</text>
</comment>
<comment type="subunit">
    <text evidence="1">Homodimer.</text>
</comment>
<comment type="similarity">
    <text evidence="1">Belongs to the IlvD/Edd family.</text>
</comment>
<evidence type="ECO:0000255" key="1">
    <source>
        <dbReference type="HAMAP-Rule" id="MF_00012"/>
    </source>
</evidence>
<evidence type="ECO:0000256" key="2">
    <source>
        <dbReference type="SAM" id="MobiDB-lite"/>
    </source>
</evidence>
<keyword id="KW-0001">2Fe-2S</keyword>
<keyword id="KW-0028">Amino-acid biosynthesis</keyword>
<keyword id="KW-0100">Branched-chain amino acid biosynthesis</keyword>
<keyword id="KW-0408">Iron</keyword>
<keyword id="KW-0411">Iron-sulfur</keyword>
<keyword id="KW-0456">Lyase</keyword>
<keyword id="KW-0460">Magnesium</keyword>
<keyword id="KW-0479">Metal-binding</keyword>